<name>MANG_DICDI</name>
<keyword id="KW-0903">Direct protein sequencing</keyword>
<keyword id="KW-0326">Glycosidase</keyword>
<keyword id="KW-0378">Hydrolase</keyword>
<keyword id="KW-0479">Metal-binding</keyword>
<keyword id="KW-1185">Reference proteome</keyword>
<keyword id="KW-0862">Zinc</keyword>
<proteinExistence type="evidence at protein level"/>
<sequence length="1087" mass="123691">MTSGNVMLKHQDVTIERIEKFLSDTYFVRENLYGKLISLKSSEAVKVKVSPKVEGISYKDAIQLEYKDTKIGESFGPSWTNYWFKVTIDVPTDWKDKTIHFIWNSSCEGLIWMNGIAIQGLIGGTWQDLREEYKLIENSKGGEHFEFYIEISCNGMFGVGKDGLINPCDPDRTFELTKAEIRVKNKEANELYMYLQMLYDVGKNFPKESLRKKQAIWVANDIINQCNVNDSRTFSKCIELAKKEFFSQHNSESQTRVWAVGHCHIDLCWLWSFEKTKEKCARSFSTQILYMDYYPQFKFTQSQAQAYQWTKENYPELYERIKEKVVTGQFIPTGGTWVEMDGNLPSGESFIRQFLYGQRFFEKEFGKKCTEFFLPDTFGYSAQLPQVIRHMGIENFITQKLSWNNLNKFPHSTFIWEGIDGSSVLTHFPPADTYNSQADVKEIVMSSSNNKDIDRCNESMLLYGNGDGGGGPTIPMIERLTILKDTAGIPKIEFSTPAQFFKQLEPHRSKLNKWVGELYFELHRGTYTSQATTKRGNRLCEIELHATEMLTSYCELFVEGFKSPNLSKLWQQVLLCQFHDALPGSSIQVCYEDILKIHQQVLVECKNIITQSMNHITGTLLKIDNLPTTSTTTSTTTTSTTECTKNSEFVLAFNANDFEISRVIEIPKSNKDIQAQYINAIQTSYNGLPLGTVSLPPNGFSAINISTSGDNRTINRKPGYPCTAIEKNDASGDILIDNQFISIVIGSNGRIKSLIEKSANREVIKQDGSLGNRLIIFDDTCLFWDAWDQEIFSLEKPLSILEGTCKIIENGPLRCVVQVHYDSKGLPSGNGSVNQTIIVHFNSARVDFETNVNWNEAHKLLRVDFDTNIRAKNANYEIQFGHIERPTHYNTSWDFARFEVVGHKWADLSEYDFGMALLNDCKYGYSTLGGRIGLSLLRSPKSPDDTCDMGSHKFTYSIYPHRGSLQSASVIKEGYSLNNNFYISETPFSLASTTHIDKTFISTNKEAIIVDTIKKAEDGTSFVVRVYESFGGATTFNFTSSILPIPFKSIIECNGLEEVNQSSKSYKFNDTIKINPFEIKTFRFISN</sequence>
<dbReference type="EC" id="3.2.1.24"/>
<dbReference type="EMBL" id="AAFI02000102">
    <property type="protein sequence ID" value="EAL63688.1"/>
    <property type="molecule type" value="Genomic_DNA"/>
</dbReference>
<dbReference type="RefSeq" id="XP_637188.1">
    <property type="nucleotide sequence ID" value="XM_632096.1"/>
</dbReference>
<dbReference type="SMR" id="Q54K67"/>
<dbReference type="FunCoup" id="Q54K67">
    <property type="interactions" value="83"/>
</dbReference>
<dbReference type="STRING" id="44689.Q54K67"/>
<dbReference type="GlyGen" id="Q54K67">
    <property type="glycosylation" value="1 site"/>
</dbReference>
<dbReference type="PaxDb" id="44689-DDB0231611"/>
<dbReference type="EnsemblProtists" id="EAL63688">
    <property type="protein sequence ID" value="EAL63688"/>
    <property type="gene ID" value="DDB_G0287577"/>
</dbReference>
<dbReference type="GeneID" id="8626190"/>
<dbReference type="KEGG" id="ddi:DDB_G0287577"/>
<dbReference type="dictyBase" id="DDB_G0287577">
    <property type="gene designation" value="manG"/>
</dbReference>
<dbReference type="VEuPathDB" id="AmoebaDB:DDB_G0287577"/>
<dbReference type="eggNOG" id="KOG4342">
    <property type="taxonomic scope" value="Eukaryota"/>
</dbReference>
<dbReference type="HOGENOM" id="CLU_003442_0_1_1"/>
<dbReference type="InParanoid" id="Q54K67"/>
<dbReference type="OMA" id="GQYWDAW"/>
<dbReference type="PhylomeDB" id="Q54K67"/>
<dbReference type="Reactome" id="R-DDI-8853383">
    <property type="pathway name" value="Lysosomal oligosaccharide catabolism"/>
</dbReference>
<dbReference type="PRO" id="PR:Q54K67"/>
<dbReference type="Proteomes" id="UP000002195">
    <property type="component" value="Chromosome 5"/>
</dbReference>
<dbReference type="GO" id="GO:0004559">
    <property type="term" value="F:alpha-mannosidase activity"/>
    <property type="evidence" value="ECO:0000318"/>
    <property type="project" value="GO_Central"/>
</dbReference>
<dbReference type="GO" id="GO:0030246">
    <property type="term" value="F:carbohydrate binding"/>
    <property type="evidence" value="ECO:0007669"/>
    <property type="project" value="InterPro"/>
</dbReference>
<dbReference type="GO" id="GO:0046872">
    <property type="term" value="F:metal ion binding"/>
    <property type="evidence" value="ECO:0007669"/>
    <property type="project" value="UniProtKB-KW"/>
</dbReference>
<dbReference type="GO" id="GO:0006013">
    <property type="term" value="P:mannose metabolic process"/>
    <property type="evidence" value="ECO:0007669"/>
    <property type="project" value="InterPro"/>
</dbReference>
<dbReference type="GO" id="GO:0009313">
    <property type="term" value="P:oligosaccharide catabolic process"/>
    <property type="evidence" value="ECO:0000318"/>
    <property type="project" value="GO_Central"/>
</dbReference>
<dbReference type="FunFam" id="1.20.1270.50:FF:000004">
    <property type="entry name" value="alpha-mannosidase 2C1 isoform X1"/>
    <property type="match status" value="1"/>
</dbReference>
<dbReference type="FunFam" id="3.20.110.10:FF:000002">
    <property type="entry name" value="alpha-mannosidase 2C1 isoform X1"/>
    <property type="match status" value="1"/>
</dbReference>
<dbReference type="FunFam" id="2.70.98.30:FF:000001">
    <property type="entry name" value="alpha-mannosidase 2C1 isoform X2"/>
    <property type="match status" value="1"/>
</dbReference>
<dbReference type="Gene3D" id="2.60.40.2220">
    <property type="match status" value="1"/>
</dbReference>
<dbReference type="Gene3D" id="3.20.110.10">
    <property type="entry name" value="Glycoside hydrolase 38, N terminal domain"/>
    <property type="match status" value="1"/>
</dbReference>
<dbReference type="Gene3D" id="1.20.1270.50">
    <property type="entry name" value="Glycoside hydrolase family 38, central domain"/>
    <property type="match status" value="1"/>
</dbReference>
<dbReference type="Gene3D" id="2.70.98.30">
    <property type="entry name" value="Golgi alpha-mannosidase II, domain 4"/>
    <property type="match status" value="1"/>
</dbReference>
<dbReference type="InterPro" id="IPR054723">
    <property type="entry name" value="Ams1-like_N"/>
</dbReference>
<dbReference type="InterPro" id="IPR011013">
    <property type="entry name" value="Gal_mutarotase_sf_dom"/>
</dbReference>
<dbReference type="InterPro" id="IPR041147">
    <property type="entry name" value="GH38_C"/>
</dbReference>
<dbReference type="InterPro" id="IPR011330">
    <property type="entry name" value="Glyco_hydro/deAcase_b/a-brl"/>
</dbReference>
<dbReference type="InterPro" id="IPR011682">
    <property type="entry name" value="Glyco_hydro_38_C"/>
</dbReference>
<dbReference type="InterPro" id="IPR015341">
    <property type="entry name" value="Glyco_hydro_38_cen"/>
</dbReference>
<dbReference type="InterPro" id="IPR037094">
    <property type="entry name" value="Glyco_hydro_38_cen_sf"/>
</dbReference>
<dbReference type="InterPro" id="IPR000602">
    <property type="entry name" value="Glyco_hydro_38_N"/>
</dbReference>
<dbReference type="InterPro" id="IPR027291">
    <property type="entry name" value="Glyco_hydro_38_N_sf"/>
</dbReference>
<dbReference type="InterPro" id="IPR028995">
    <property type="entry name" value="Glyco_hydro_57/38_cen_sf"/>
</dbReference>
<dbReference type="PANTHER" id="PTHR46017">
    <property type="entry name" value="ALPHA-MANNOSIDASE 2C1"/>
    <property type="match status" value="1"/>
</dbReference>
<dbReference type="PANTHER" id="PTHR46017:SF1">
    <property type="entry name" value="ALPHA-MANNOSIDASE 2C1"/>
    <property type="match status" value="1"/>
</dbReference>
<dbReference type="Pfam" id="PF09261">
    <property type="entry name" value="Alpha-mann_mid"/>
    <property type="match status" value="1"/>
</dbReference>
<dbReference type="Pfam" id="PF22907">
    <property type="entry name" value="Ams1-like_1st"/>
    <property type="match status" value="1"/>
</dbReference>
<dbReference type="Pfam" id="PF17677">
    <property type="entry name" value="Glyco_hydro38C2"/>
    <property type="match status" value="1"/>
</dbReference>
<dbReference type="Pfam" id="PF07748">
    <property type="entry name" value="Glyco_hydro_38C"/>
    <property type="match status" value="1"/>
</dbReference>
<dbReference type="Pfam" id="PF01074">
    <property type="entry name" value="Glyco_hydro_38N"/>
    <property type="match status" value="1"/>
</dbReference>
<dbReference type="SMART" id="SM00872">
    <property type="entry name" value="Alpha-mann_mid"/>
    <property type="match status" value="1"/>
</dbReference>
<dbReference type="SUPFAM" id="SSF88688">
    <property type="entry name" value="Families 57/38 glycoside transferase middle domain"/>
    <property type="match status" value="1"/>
</dbReference>
<dbReference type="SUPFAM" id="SSF74650">
    <property type="entry name" value="Galactose mutarotase-like"/>
    <property type="match status" value="1"/>
</dbReference>
<dbReference type="SUPFAM" id="SSF88713">
    <property type="entry name" value="Glycoside hydrolase/deacetylase"/>
    <property type="match status" value="1"/>
</dbReference>
<gene>
    <name type="primary">manG</name>
    <name type="ORF">DDB_G0287577</name>
</gene>
<reference key="1">
    <citation type="journal article" date="2005" name="Nature">
        <title>The genome of the social amoeba Dictyostelium discoideum.</title>
        <authorList>
            <person name="Eichinger L."/>
            <person name="Pachebat J.A."/>
            <person name="Gloeckner G."/>
            <person name="Rajandream M.A."/>
            <person name="Sucgang R."/>
            <person name="Berriman M."/>
            <person name="Song J."/>
            <person name="Olsen R."/>
            <person name="Szafranski K."/>
            <person name="Xu Q."/>
            <person name="Tunggal B."/>
            <person name="Kummerfeld S."/>
            <person name="Madera M."/>
            <person name="Konfortov B.A."/>
            <person name="Rivero F."/>
            <person name="Bankier A.T."/>
            <person name="Lehmann R."/>
            <person name="Hamlin N."/>
            <person name="Davies R."/>
            <person name="Gaudet P."/>
            <person name="Fey P."/>
            <person name="Pilcher K."/>
            <person name="Chen G."/>
            <person name="Saunders D."/>
            <person name="Sodergren E.J."/>
            <person name="Davis P."/>
            <person name="Kerhornou A."/>
            <person name="Nie X."/>
            <person name="Hall N."/>
            <person name="Anjard C."/>
            <person name="Hemphill L."/>
            <person name="Bason N."/>
            <person name="Farbrother P."/>
            <person name="Desany B."/>
            <person name="Just E."/>
            <person name="Morio T."/>
            <person name="Rost R."/>
            <person name="Churcher C.M."/>
            <person name="Cooper J."/>
            <person name="Haydock S."/>
            <person name="van Driessche N."/>
            <person name="Cronin A."/>
            <person name="Goodhead I."/>
            <person name="Muzny D.M."/>
            <person name="Mourier T."/>
            <person name="Pain A."/>
            <person name="Lu M."/>
            <person name="Harper D."/>
            <person name="Lindsay R."/>
            <person name="Hauser H."/>
            <person name="James K.D."/>
            <person name="Quiles M."/>
            <person name="Madan Babu M."/>
            <person name="Saito T."/>
            <person name="Buchrieser C."/>
            <person name="Wardroper A."/>
            <person name="Felder M."/>
            <person name="Thangavelu M."/>
            <person name="Johnson D."/>
            <person name="Knights A."/>
            <person name="Loulseged H."/>
            <person name="Mungall K.L."/>
            <person name="Oliver K."/>
            <person name="Price C."/>
            <person name="Quail M.A."/>
            <person name="Urushihara H."/>
            <person name="Hernandez J."/>
            <person name="Rabbinowitsch E."/>
            <person name="Steffen D."/>
            <person name="Sanders M."/>
            <person name="Ma J."/>
            <person name="Kohara Y."/>
            <person name="Sharp S."/>
            <person name="Simmonds M.N."/>
            <person name="Spiegler S."/>
            <person name="Tivey A."/>
            <person name="Sugano S."/>
            <person name="White B."/>
            <person name="Walker D."/>
            <person name="Woodward J.R."/>
            <person name="Winckler T."/>
            <person name="Tanaka Y."/>
            <person name="Shaulsky G."/>
            <person name="Schleicher M."/>
            <person name="Weinstock G.M."/>
            <person name="Rosenthal A."/>
            <person name="Cox E.C."/>
            <person name="Chisholm R.L."/>
            <person name="Gibbs R.A."/>
            <person name="Loomis W.F."/>
            <person name="Platzer M."/>
            <person name="Kay R.R."/>
            <person name="Williams J.G."/>
            <person name="Dear P.H."/>
            <person name="Noegel A.A."/>
            <person name="Barrell B.G."/>
            <person name="Kuspa A."/>
        </authorList>
    </citation>
    <scope>NUCLEOTIDE SEQUENCE [LARGE SCALE GENOMIC DNA]</scope>
    <source>
        <strain>AX4</strain>
    </source>
</reference>
<reference key="2">
    <citation type="submission" date="2009-07" db="UniProtKB">
        <authorList>
            <person name="Bienvenut W.V."/>
            <person name="Ura S."/>
            <person name="Insall R.H."/>
        </authorList>
    </citation>
    <scope>PROTEIN SEQUENCE OF 863-870 AND 932-938</scope>
    <scope>IDENTIFICATION BY MASS SPECTROMETRY</scope>
    <source>
        <strain>AX2</strain>
    </source>
</reference>
<organism>
    <name type="scientific">Dictyostelium discoideum</name>
    <name type="common">Social amoeba</name>
    <dbReference type="NCBI Taxonomy" id="44689"/>
    <lineage>
        <taxon>Eukaryota</taxon>
        <taxon>Amoebozoa</taxon>
        <taxon>Evosea</taxon>
        <taxon>Eumycetozoa</taxon>
        <taxon>Dictyostelia</taxon>
        <taxon>Dictyosteliales</taxon>
        <taxon>Dictyosteliaceae</taxon>
        <taxon>Dictyostelium</taxon>
    </lineage>
</organism>
<accession>Q54K67</accession>
<evidence type="ECO:0000250" key="1"/>
<evidence type="ECO:0000305" key="2"/>
<comment type="catalytic activity">
    <reaction>
        <text>Hydrolysis of terminal, non-reducing alpha-D-mannose residues in alpha-D-mannosides.</text>
        <dbReference type="EC" id="3.2.1.24"/>
    </reaction>
</comment>
<comment type="cofactor">
    <cofactor evidence="1">
        <name>Zn(2+)</name>
        <dbReference type="ChEBI" id="CHEBI:29105"/>
    </cofactor>
    <text evidence="1">Binds 1 zinc ion per subunit.</text>
</comment>
<comment type="similarity">
    <text evidence="2">Belongs to the glycosyl hydrolase 38 family.</text>
</comment>
<protein>
    <recommendedName>
        <fullName>Alpha-mannosidase G</fullName>
        <ecNumber>3.2.1.24</ecNumber>
    </recommendedName>
</protein>
<feature type="chain" id="PRO_0000327486" description="Alpha-mannosidase G">
    <location>
        <begin position="1"/>
        <end position="1087"/>
    </location>
</feature>
<feature type="active site" description="Nucleophile" evidence="1">
    <location>
        <position position="376"/>
    </location>
</feature>
<feature type="binding site" evidence="1">
    <location>
        <position position="264"/>
    </location>
    <ligand>
        <name>Zn(2+)</name>
        <dbReference type="ChEBI" id="CHEBI:29105"/>
    </ligand>
</feature>
<feature type="binding site" evidence="1">
    <location>
        <position position="266"/>
    </location>
    <ligand>
        <name>Zn(2+)</name>
        <dbReference type="ChEBI" id="CHEBI:29105"/>
    </ligand>
</feature>
<feature type="binding site" evidence="1">
    <location>
        <position position="376"/>
    </location>
    <ligand>
        <name>Zn(2+)</name>
        <dbReference type="ChEBI" id="CHEBI:29105"/>
    </ligand>
</feature>
<feature type="binding site" evidence="1">
    <location>
        <position position="579"/>
    </location>
    <ligand>
        <name>Zn(2+)</name>
        <dbReference type="ChEBI" id="CHEBI:29105"/>
    </ligand>
</feature>